<comment type="function">
    <text evidence="1">Catalyzes the addition of meso-diaminopimelic acid to the nucleotide precursor UDP-N-acetylmuramoyl-L-alanyl-D-glutamate (UMAG) in the biosynthesis of bacterial cell-wall peptidoglycan.</text>
</comment>
<comment type="catalytic activity">
    <reaction evidence="1">
        <text>UDP-N-acetyl-alpha-D-muramoyl-L-alanyl-D-glutamate + meso-2,6-diaminopimelate + ATP = UDP-N-acetyl-alpha-D-muramoyl-L-alanyl-gamma-D-glutamyl-meso-2,6-diaminopimelate + ADP + phosphate + H(+)</text>
        <dbReference type="Rhea" id="RHEA:23676"/>
        <dbReference type="ChEBI" id="CHEBI:15378"/>
        <dbReference type="ChEBI" id="CHEBI:30616"/>
        <dbReference type="ChEBI" id="CHEBI:43474"/>
        <dbReference type="ChEBI" id="CHEBI:57791"/>
        <dbReference type="ChEBI" id="CHEBI:83900"/>
        <dbReference type="ChEBI" id="CHEBI:83905"/>
        <dbReference type="ChEBI" id="CHEBI:456216"/>
        <dbReference type="EC" id="6.3.2.13"/>
    </reaction>
</comment>
<comment type="cofactor">
    <cofactor evidence="1">
        <name>Mg(2+)</name>
        <dbReference type="ChEBI" id="CHEBI:18420"/>
    </cofactor>
</comment>
<comment type="pathway">
    <text evidence="1">Cell wall biogenesis; peptidoglycan biosynthesis.</text>
</comment>
<comment type="subcellular location">
    <subcellularLocation>
        <location evidence="1">Cytoplasm</location>
    </subcellularLocation>
</comment>
<comment type="PTM">
    <text evidence="1">Carboxylation is probably crucial for Mg(2+) binding and, consequently, for the gamma-phosphate positioning of ATP.</text>
</comment>
<comment type="similarity">
    <text evidence="1">Belongs to the MurCDEF family. MurE subfamily.</text>
</comment>
<evidence type="ECO:0000255" key="1">
    <source>
        <dbReference type="HAMAP-Rule" id="MF_00208"/>
    </source>
</evidence>
<accession>Q4UQW6</accession>
<name>MURE_XANC8</name>
<proteinExistence type="inferred from homology"/>
<protein>
    <recommendedName>
        <fullName evidence="1">UDP-N-acetylmuramoyl-L-alanyl-D-glutamate--2,6-diaminopimelate ligase</fullName>
        <ecNumber evidence="1">6.3.2.13</ecNumber>
    </recommendedName>
    <alternativeName>
        <fullName evidence="1">Meso-A2pm-adding enzyme</fullName>
    </alternativeName>
    <alternativeName>
        <fullName evidence="1">Meso-diaminopimelate-adding enzyme</fullName>
    </alternativeName>
    <alternativeName>
        <fullName evidence="1">UDP-MurNAc-L-Ala-D-Glu:meso-diaminopimelate ligase</fullName>
    </alternativeName>
    <alternativeName>
        <fullName evidence="1">UDP-MurNAc-tripeptide synthetase</fullName>
    </alternativeName>
    <alternativeName>
        <fullName evidence="1">UDP-N-acetylmuramyl-tripeptide synthetase</fullName>
    </alternativeName>
</protein>
<gene>
    <name evidence="1" type="primary">murE</name>
    <name type="ordered locus">XC_3514</name>
</gene>
<keyword id="KW-0067">ATP-binding</keyword>
<keyword id="KW-0131">Cell cycle</keyword>
<keyword id="KW-0132">Cell division</keyword>
<keyword id="KW-0133">Cell shape</keyword>
<keyword id="KW-0961">Cell wall biogenesis/degradation</keyword>
<keyword id="KW-0963">Cytoplasm</keyword>
<keyword id="KW-0436">Ligase</keyword>
<keyword id="KW-0460">Magnesium</keyword>
<keyword id="KW-0547">Nucleotide-binding</keyword>
<keyword id="KW-0573">Peptidoglycan synthesis</keyword>
<organism>
    <name type="scientific">Xanthomonas campestris pv. campestris (strain 8004)</name>
    <dbReference type="NCBI Taxonomy" id="314565"/>
    <lineage>
        <taxon>Bacteria</taxon>
        <taxon>Pseudomonadati</taxon>
        <taxon>Pseudomonadota</taxon>
        <taxon>Gammaproteobacteria</taxon>
        <taxon>Lysobacterales</taxon>
        <taxon>Lysobacteraceae</taxon>
        <taxon>Xanthomonas</taxon>
    </lineage>
</organism>
<dbReference type="EC" id="6.3.2.13" evidence="1"/>
<dbReference type="EMBL" id="CP000050">
    <property type="protein sequence ID" value="AAY50557.1"/>
    <property type="molecule type" value="Genomic_DNA"/>
</dbReference>
<dbReference type="SMR" id="Q4UQW6"/>
<dbReference type="KEGG" id="xcb:XC_3514"/>
<dbReference type="HOGENOM" id="CLU_022291_3_2_6"/>
<dbReference type="UniPathway" id="UPA00219"/>
<dbReference type="Proteomes" id="UP000000420">
    <property type="component" value="Chromosome"/>
</dbReference>
<dbReference type="GO" id="GO:0005737">
    <property type="term" value="C:cytoplasm"/>
    <property type="evidence" value="ECO:0007669"/>
    <property type="project" value="UniProtKB-SubCell"/>
</dbReference>
<dbReference type="GO" id="GO:0005524">
    <property type="term" value="F:ATP binding"/>
    <property type="evidence" value="ECO:0007669"/>
    <property type="project" value="UniProtKB-UniRule"/>
</dbReference>
<dbReference type="GO" id="GO:0000287">
    <property type="term" value="F:magnesium ion binding"/>
    <property type="evidence" value="ECO:0007669"/>
    <property type="project" value="UniProtKB-UniRule"/>
</dbReference>
<dbReference type="GO" id="GO:0008765">
    <property type="term" value="F:UDP-N-acetylmuramoylalanyl-D-glutamate-2,6-diaminopimelate ligase activity"/>
    <property type="evidence" value="ECO:0007669"/>
    <property type="project" value="UniProtKB-UniRule"/>
</dbReference>
<dbReference type="GO" id="GO:0051301">
    <property type="term" value="P:cell division"/>
    <property type="evidence" value="ECO:0007669"/>
    <property type="project" value="UniProtKB-KW"/>
</dbReference>
<dbReference type="GO" id="GO:0071555">
    <property type="term" value="P:cell wall organization"/>
    <property type="evidence" value="ECO:0007669"/>
    <property type="project" value="UniProtKB-KW"/>
</dbReference>
<dbReference type="GO" id="GO:0009252">
    <property type="term" value="P:peptidoglycan biosynthetic process"/>
    <property type="evidence" value="ECO:0007669"/>
    <property type="project" value="UniProtKB-UniRule"/>
</dbReference>
<dbReference type="GO" id="GO:0008360">
    <property type="term" value="P:regulation of cell shape"/>
    <property type="evidence" value="ECO:0007669"/>
    <property type="project" value="UniProtKB-KW"/>
</dbReference>
<dbReference type="Gene3D" id="3.90.190.20">
    <property type="entry name" value="Mur ligase, C-terminal domain"/>
    <property type="match status" value="1"/>
</dbReference>
<dbReference type="Gene3D" id="3.40.1190.10">
    <property type="entry name" value="Mur-like, catalytic domain"/>
    <property type="match status" value="1"/>
</dbReference>
<dbReference type="Gene3D" id="3.40.1390.10">
    <property type="entry name" value="MurE/MurF, N-terminal domain"/>
    <property type="match status" value="1"/>
</dbReference>
<dbReference type="HAMAP" id="MF_00208">
    <property type="entry name" value="MurE"/>
    <property type="match status" value="1"/>
</dbReference>
<dbReference type="InterPro" id="IPR036565">
    <property type="entry name" value="Mur-like_cat_sf"/>
</dbReference>
<dbReference type="InterPro" id="IPR004101">
    <property type="entry name" value="Mur_ligase_C"/>
</dbReference>
<dbReference type="InterPro" id="IPR036615">
    <property type="entry name" value="Mur_ligase_C_dom_sf"/>
</dbReference>
<dbReference type="InterPro" id="IPR013221">
    <property type="entry name" value="Mur_ligase_cen"/>
</dbReference>
<dbReference type="InterPro" id="IPR000713">
    <property type="entry name" value="Mur_ligase_N"/>
</dbReference>
<dbReference type="InterPro" id="IPR035911">
    <property type="entry name" value="MurE/MurF_N"/>
</dbReference>
<dbReference type="InterPro" id="IPR005761">
    <property type="entry name" value="UDP-N-AcMur-Glu-dNH2Pim_ligase"/>
</dbReference>
<dbReference type="NCBIfam" id="TIGR01085">
    <property type="entry name" value="murE"/>
    <property type="match status" value="1"/>
</dbReference>
<dbReference type="NCBIfam" id="NF001124">
    <property type="entry name" value="PRK00139.1-2"/>
    <property type="match status" value="1"/>
</dbReference>
<dbReference type="NCBIfam" id="NF001126">
    <property type="entry name" value="PRK00139.1-4"/>
    <property type="match status" value="1"/>
</dbReference>
<dbReference type="PANTHER" id="PTHR23135">
    <property type="entry name" value="MUR LIGASE FAMILY MEMBER"/>
    <property type="match status" value="1"/>
</dbReference>
<dbReference type="PANTHER" id="PTHR23135:SF4">
    <property type="entry name" value="UDP-N-ACETYLMURAMOYL-L-ALANYL-D-GLUTAMATE--2,6-DIAMINOPIMELATE LIGASE MURE HOMOLOG, CHLOROPLASTIC"/>
    <property type="match status" value="1"/>
</dbReference>
<dbReference type="Pfam" id="PF01225">
    <property type="entry name" value="Mur_ligase"/>
    <property type="match status" value="1"/>
</dbReference>
<dbReference type="Pfam" id="PF02875">
    <property type="entry name" value="Mur_ligase_C"/>
    <property type="match status" value="1"/>
</dbReference>
<dbReference type="Pfam" id="PF08245">
    <property type="entry name" value="Mur_ligase_M"/>
    <property type="match status" value="1"/>
</dbReference>
<dbReference type="SUPFAM" id="SSF53623">
    <property type="entry name" value="MurD-like peptide ligases, catalytic domain"/>
    <property type="match status" value="1"/>
</dbReference>
<dbReference type="SUPFAM" id="SSF53244">
    <property type="entry name" value="MurD-like peptide ligases, peptide-binding domain"/>
    <property type="match status" value="1"/>
</dbReference>
<dbReference type="SUPFAM" id="SSF63418">
    <property type="entry name" value="MurE/MurF N-terminal domain"/>
    <property type="match status" value="1"/>
</dbReference>
<reference key="1">
    <citation type="journal article" date="2005" name="Genome Res.">
        <title>Comparative and functional genomic analyses of the pathogenicity of phytopathogen Xanthomonas campestris pv. campestris.</title>
        <authorList>
            <person name="Qian W."/>
            <person name="Jia Y."/>
            <person name="Ren S.-X."/>
            <person name="He Y.-Q."/>
            <person name="Feng J.-X."/>
            <person name="Lu L.-F."/>
            <person name="Sun Q."/>
            <person name="Ying G."/>
            <person name="Tang D.-J."/>
            <person name="Tang H."/>
            <person name="Wu W."/>
            <person name="Hao P."/>
            <person name="Wang L."/>
            <person name="Jiang B.-L."/>
            <person name="Zeng S."/>
            <person name="Gu W.-Y."/>
            <person name="Lu G."/>
            <person name="Rong L."/>
            <person name="Tian Y."/>
            <person name="Yao Z."/>
            <person name="Fu G."/>
            <person name="Chen B."/>
            <person name="Fang R."/>
            <person name="Qiang B."/>
            <person name="Chen Z."/>
            <person name="Zhao G.-P."/>
            <person name="Tang J.-L."/>
            <person name="He C."/>
        </authorList>
    </citation>
    <scope>NUCLEOTIDE SEQUENCE [LARGE SCALE GENOMIC DNA]</scope>
    <source>
        <strain>8004</strain>
    </source>
</reference>
<sequence>MSRAMALSQLLPDVALARDVQVSGLVMDSRAVRPGDAFVAIAGFGAHGLGFAAQALASGASAILFEPPAPADLPVPADAIAVPGLRARLGVLADHFHGAPSQAMRMIGVTGTNGKTSTVQLLAQALTLLGTPTGTIGTLGVGLYGAAVPTGFTTPLVLQTHAELAQLRDAGAQAVAMEVSSHALDQGRVDAVQFDVAVFTNLTRDHLDYHGDMAQYGAAKAKLFARAGLRAAVVNLDDAFGRTLFAALDPALHAIGVSSRAQAGATVQAQDLQLDHHGIQFTLHIGEAAHPVRSPLLGRFNVDNLLAVAGALHALDIAPAQIAEVLGRLQPIHGRMNRLGGAHGAPLVVVDYAHTPDALEQALTSLRSHAQDRLICVFGCGGERDTGKRPQMAAIAEVTADVAIVTDDNPRGEDGDVIVADILRGFARPDAAIVQRDRAAAIHQAISMAGADDIVLIAGKGHEPYQEVAGVRHAFDDAAVAAQALLPRTGLGVRV</sequence>
<feature type="chain" id="PRO_1000012402" description="UDP-N-acetylmuramoyl-L-alanyl-D-glutamate--2,6-diaminopimelate ligase">
    <location>
        <begin position="1"/>
        <end position="495"/>
    </location>
</feature>
<feature type="short sequence motif" description="Meso-diaminopimelate recognition motif">
    <location>
        <begin position="408"/>
        <end position="411"/>
    </location>
</feature>
<feature type="binding site" evidence="1">
    <location>
        <position position="29"/>
    </location>
    <ligand>
        <name>UDP-N-acetyl-alpha-D-muramoyl-L-alanyl-D-glutamate</name>
        <dbReference type="ChEBI" id="CHEBI:83900"/>
    </ligand>
</feature>
<feature type="binding site" evidence="1">
    <location>
        <begin position="111"/>
        <end position="117"/>
    </location>
    <ligand>
        <name>ATP</name>
        <dbReference type="ChEBI" id="CHEBI:30616"/>
    </ligand>
</feature>
<feature type="binding site" evidence="1">
    <location>
        <begin position="153"/>
        <end position="154"/>
    </location>
    <ligand>
        <name>UDP-N-acetyl-alpha-D-muramoyl-L-alanyl-D-glutamate</name>
        <dbReference type="ChEBI" id="CHEBI:83900"/>
    </ligand>
</feature>
<feature type="binding site" evidence="1">
    <location>
        <position position="180"/>
    </location>
    <ligand>
        <name>UDP-N-acetyl-alpha-D-muramoyl-L-alanyl-D-glutamate</name>
        <dbReference type="ChEBI" id="CHEBI:83900"/>
    </ligand>
</feature>
<feature type="binding site" evidence="1">
    <location>
        <position position="186"/>
    </location>
    <ligand>
        <name>UDP-N-acetyl-alpha-D-muramoyl-L-alanyl-D-glutamate</name>
        <dbReference type="ChEBI" id="CHEBI:83900"/>
    </ligand>
</feature>
<feature type="binding site" evidence="1">
    <location>
        <position position="188"/>
    </location>
    <ligand>
        <name>UDP-N-acetyl-alpha-D-muramoyl-L-alanyl-D-glutamate</name>
        <dbReference type="ChEBI" id="CHEBI:83900"/>
    </ligand>
</feature>
<feature type="binding site" evidence="1">
    <location>
        <position position="384"/>
    </location>
    <ligand>
        <name>meso-2,6-diaminopimelate</name>
        <dbReference type="ChEBI" id="CHEBI:57791"/>
    </ligand>
</feature>
<feature type="binding site" evidence="1">
    <location>
        <begin position="408"/>
        <end position="411"/>
    </location>
    <ligand>
        <name>meso-2,6-diaminopimelate</name>
        <dbReference type="ChEBI" id="CHEBI:57791"/>
    </ligand>
</feature>
<feature type="binding site" evidence="1">
    <location>
        <position position="459"/>
    </location>
    <ligand>
        <name>meso-2,6-diaminopimelate</name>
        <dbReference type="ChEBI" id="CHEBI:57791"/>
    </ligand>
</feature>
<feature type="binding site" evidence="1">
    <location>
        <position position="463"/>
    </location>
    <ligand>
        <name>meso-2,6-diaminopimelate</name>
        <dbReference type="ChEBI" id="CHEBI:57791"/>
    </ligand>
</feature>
<feature type="modified residue" description="N6-carboxylysine" evidence="1">
    <location>
        <position position="220"/>
    </location>
</feature>